<name>TRI54_RAT</name>
<organism>
    <name type="scientific">Rattus norvegicus</name>
    <name type="common">Rat</name>
    <dbReference type="NCBI Taxonomy" id="10116"/>
    <lineage>
        <taxon>Eukaryota</taxon>
        <taxon>Metazoa</taxon>
        <taxon>Chordata</taxon>
        <taxon>Craniata</taxon>
        <taxon>Vertebrata</taxon>
        <taxon>Euteleostomi</taxon>
        <taxon>Mammalia</taxon>
        <taxon>Eutheria</taxon>
        <taxon>Euarchontoglires</taxon>
        <taxon>Glires</taxon>
        <taxon>Rodentia</taxon>
        <taxon>Myomorpha</taxon>
        <taxon>Muroidea</taxon>
        <taxon>Muridae</taxon>
        <taxon>Murinae</taxon>
        <taxon>Rattus</taxon>
    </lineage>
</organism>
<evidence type="ECO:0000250" key="1"/>
<evidence type="ECO:0000255" key="2"/>
<evidence type="ECO:0000255" key="3">
    <source>
        <dbReference type="PROSITE-ProRule" id="PRU00024"/>
    </source>
</evidence>
<evidence type="ECO:0000255" key="4">
    <source>
        <dbReference type="PROSITE-ProRule" id="PRU00175"/>
    </source>
</evidence>
<evidence type="ECO:0000255" key="5">
    <source>
        <dbReference type="PROSITE-ProRule" id="PRU00586"/>
    </source>
</evidence>
<evidence type="ECO:0000256" key="6">
    <source>
        <dbReference type="SAM" id="MobiDB-lite"/>
    </source>
</evidence>
<dbReference type="EMBL" id="BC083706">
    <property type="protein sequence ID" value="AAH83706.1"/>
    <property type="molecule type" value="mRNA"/>
</dbReference>
<dbReference type="RefSeq" id="NP_001013235.1">
    <property type="nucleotide sequence ID" value="NM_001013217.1"/>
</dbReference>
<dbReference type="SMR" id="Q5XIH6"/>
<dbReference type="FunCoup" id="Q5XIH6">
    <property type="interactions" value="170"/>
</dbReference>
<dbReference type="IntAct" id="Q5XIH6">
    <property type="interactions" value="1"/>
</dbReference>
<dbReference type="STRING" id="10116.ENSRNOP00000008113"/>
<dbReference type="PhosphoSitePlus" id="Q5XIH6"/>
<dbReference type="PaxDb" id="10116-ENSRNOP00000008113"/>
<dbReference type="Ensembl" id="ENSRNOT00000008113.7">
    <property type="protein sequence ID" value="ENSRNOP00000008113.5"/>
    <property type="gene ID" value="ENSRNOG00000006146.7"/>
</dbReference>
<dbReference type="GeneID" id="362708"/>
<dbReference type="KEGG" id="rno:362708"/>
<dbReference type="AGR" id="RGD:1306453"/>
<dbReference type="CTD" id="57159"/>
<dbReference type="RGD" id="1306453">
    <property type="gene designation" value="Trim54"/>
</dbReference>
<dbReference type="eggNOG" id="KOG2177">
    <property type="taxonomic scope" value="Eukaryota"/>
</dbReference>
<dbReference type="GeneTree" id="ENSGT00940000154004"/>
<dbReference type="HOGENOM" id="CLU_013137_5_1_1"/>
<dbReference type="InParanoid" id="Q5XIH6"/>
<dbReference type="OMA" id="MEDICRT"/>
<dbReference type="OrthoDB" id="46293at9989"/>
<dbReference type="PhylomeDB" id="Q5XIH6"/>
<dbReference type="PRO" id="PR:Q5XIH6"/>
<dbReference type="Proteomes" id="UP000002494">
    <property type="component" value="Chromosome 6"/>
</dbReference>
<dbReference type="Bgee" id="ENSRNOG00000006146">
    <property type="expression patterns" value="Expressed in skeletal muscle tissue and 9 other cell types or tissues"/>
</dbReference>
<dbReference type="GO" id="GO:0005737">
    <property type="term" value="C:cytoplasm"/>
    <property type="evidence" value="ECO:0000318"/>
    <property type="project" value="GO_Central"/>
</dbReference>
<dbReference type="GO" id="GO:0005874">
    <property type="term" value="C:microtubule"/>
    <property type="evidence" value="ECO:0007669"/>
    <property type="project" value="UniProtKB-KW"/>
</dbReference>
<dbReference type="GO" id="GO:0005875">
    <property type="term" value="C:microtubule associated complex"/>
    <property type="evidence" value="ECO:0000266"/>
    <property type="project" value="RGD"/>
</dbReference>
<dbReference type="GO" id="GO:0030018">
    <property type="term" value="C:Z disc"/>
    <property type="evidence" value="ECO:0007669"/>
    <property type="project" value="UniProtKB-SubCell"/>
</dbReference>
<dbReference type="GO" id="GO:0008017">
    <property type="term" value="F:microtubule binding"/>
    <property type="evidence" value="ECO:0000266"/>
    <property type="project" value="RGD"/>
</dbReference>
<dbReference type="GO" id="GO:0061630">
    <property type="term" value="F:ubiquitin protein ligase activity"/>
    <property type="evidence" value="ECO:0000318"/>
    <property type="project" value="GO_Central"/>
</dbReference>
<dbReference type="GO" id="GO:0008270">
    <property type="term" value="F:zinc ion binding"/>
    <property type="evidence" value="ECO:0007669"/>
    <property type="project" value="UniProtKB-KW"/>
</dbReference>
<dbReference type="GO" id="GO:0030154">
    <property type="term" value="P:cell differentiation"/>
    <property type="evidence" value="ECO:0007669"/>
    <property type="project" value="UniProtKB-KW"/>
</dbReference>
<dbReference type="GO" id="GO:0045087">
    <property type="term" value="P:innate immune response"/>
    <property type="evidence" value="ECO:0000318"/>
    <property type="project" value="GO_Central"/>
</dbReference>
<dbReference type="GO" id="GO:0007026">
    <property type="term" value="P:negative regulation of microtubule depolymerization"/>
    <property type="evidence" value="ECO:0000266"/>
    <property type="project" value="RGD"/>
</dbReference>
<dbReference type="CDD" id="cd19833">
    <property type="entry name" value="Bbox2_MuRF3_C-II"/>
    <property type="match status" value="1"/>
</dbReference>
<dbReference type="CDD" id="cd16761">
    <property type="entry name" value="RING-HC_MuRF3"/>
    <property type="match status" value="1"/>
</dbReference>
<dbReference type="FunFam" id="3.30.40.10:FF:000014">
    <property type="entry name" value="probable E3 ubiquitin-protein ligase MID2"/>
    <property type="match status" value="1"/>
</dbReference>
<dbReference type="FunFam" id="1.20.5.170:FF:000022">
    <property type="entry name" value="Tripartite motif containing 55"/>
    <property type="match status" value="1"/>
</dbReference>
<dbReference type="FunFam" id="3.30.160.60:FF:000140">
    <property type="entry name" value="Tripartite motif containing 55"/>
    <property type="match status" value="1"/>
</dbReference>
<dbReference type="Gene3D" id="1.20.5.170">
    <property type="match status" value="1"/>
</dbReference>
<dbReference type="Gene3D" id="3.30.160.60">
    <property type="entry name" value="Classic Zinc Finger"/>
    <property type="match status" value="1"/>
</dbReference>
<dbReference type="Gene3D" id="3.30.40.10">
    <property type="entry name" value="Zinc/RING finger domain, C3HC4 (zinc finger)"/>
    <property type="match status" value="1"/>
</dbReference>
<dbReference type="InterPro" id="IPR017903">
    <property type="entry name" value="COS_domain"/>
</dbReference>
<dbReference type="InterPro" id="IPR050143">
    <property type="entry name" value="TRIM/RBCC"/>
</dbReference>
<dbReference type="InterPro" id="IPR033492">
    <property type="entry name" value="Trim54_Bbox2_Zfn"/>
</dbReference>
<dbReference type="InterPro" id="IPR042752">
    <property type="entry name" value="TRIM54_RING-HC"/>
</dbReference>
<dbReference type="InterPro" id="IPR027370">
    <property type="entry name" value="Znf-RING_euk"/>
</dbReference>
<dbReference type="InterPro" id="IPR000315">
    <property type="entry name" value="Znf_B-box"/>
</dbReference>
<dbReference type="InterPro" id="IPR001841">
    <property type="entry name" value="Znf_RING"/>
</dbReference>
<dbReference type="InterPro" id="IPR013083">
    <property type="entry name" value="Znf_RING/FYVE/PHD"/>
</dbReference>
<dbReference type="InterPro" id="IPR017907">
    <property type="entry name" value="Znf_RING_CS"/>
</dbReference>
<dbReference type="PANTHER" id="PTHR24103">
    <property type="entry name" value="E3 UBIQUITIN-PROTEIN LIGASE TRIM"/>
    <property type="match status" value="1"/>
</dbReference>
<dbReference type="Pfam" id="PF00643">
    <property type="entry name" value="zf-B_box"/>
    <property type="match status" value="1"/>
</dbReference>
<dbReference type="Pfam" id="PF13445">
    <property type="entry name" value="zf-RING_UBOX"/>
    <property type="match status" value="1"/>
</dbReference>
<dbReference type="SMART" id="SM00336">
    <property type="entry name" value="BBOX"/>
    <property type="match status" value="1"/>
</dbReference>
<dbReference type="SMART" id="SM00184">
    <property type="entry name" value="RING"/>
    <property type="match status" value="1"/>
</dbReference>
<dbReference type="SUPFAM" id="SSF57845">
    <property type="entry name" value="B-box zinc-binding domain"/>
    <property type="match status" value="1"/>
</dbReference>
<dbReference type="SUPFAM" id="SSF57850">
    <property type="entry name" value="RING/U-box"/>
    <property type="match status" value="1"/>
</dbReference>
<dbReference type="PROSITE" id="PS51262">
    <property type="entry name" value="COS"/>
    <property type="match status" value="1"/>
</dbReference>
<dbReference type="PROSITE" id="PS50119">
    <property type="entry name" value="ZF_BBOX"/>
    <property type="match status" value="1"/>
</dbReference>
<dbReference type="PROSITE" id="PS00518">
    <property type="entry name" value="ZF_RING_1"/>
    <property type="match status" value="1"/>
</dbReference>
<dbReference type="PROSITE" id="PS50089">
    <property type="entry name" value="ZF_RING_2"/>
    <property type="match status" value="1"/>
</dbReference>
<comment type="function">
    <text evidence="1">May bind and stabilize microtubules during myotubes formation.</text>
</comment>
<comment type="subunit">
    <text evidence="1">Homooligomer and heterooligomer. Interacts with TRIM63 and probably with TRIM55. Interacts with tubulin (By similarity).</text>
</comment>
<comment type="subcellular location">
    <subcellularLocation>
        <location evidence="1">Cytoplasm</location>
        <location evidence="1">Cytoskeleton</location>
    </subcellularLocation>
    <subcellularLocation>
        <location evidence="1">Cytoplasm</location>
        <location evidence="1">Myofibril</location>
        <location evidence="1">Sarcomere</location>
        <location evidence="1">Z line</location>
    </subcellularLocation>
    <text evidence="1">Associates with microtubules. Localizes to the Z-lines in skeletal muscles (By similarity).</text>
</comment>
<proteinExistence type="evidence at transcript level"/>
<keyword id="KW-0175">Coiled coil</keyword>
<keyword id="KW-0963">Cytoplasm</keyword>
<keyword id="KW-0206">Cytoskeleton</keyword>
<keyword id="KW-0217">Developmental protein</keyword>
<keyword id="KW-0221">Differentiation</keyword>
<keyword id="KW-0479">Metal-binding</keyword>
<keyword id="KW-0493">Microtubule</keyword>
<keyword id="KW-1185">Reference proteome</keyword>
<keyword id="KW-0862">Zinc</keyword>
<keyword id="KW-0863">Zinc-finger</keyword>
<feature type="chain" id="PRO_0000056285" description="Tripartite motif-containing protein 54">
    <location>
        <begin position="1"/>
        <end position="364"/>
    </location>
</feature>
<feature type="domain" description="COS" evidence="5">
    <location>
        <begin position="271"/>
        <end position="329"/>
    </location>
</feature>
<feature type="zinc finger region" description="RING-type" evidence="4">
    <location>
        <begin position="26"/>
        <end position="82"/>
    </location>
</feature>
<feature type="zinc finger region" description="B box-type" evidence="3">
    <location>
        <begin position="121"/>
        <end position="163"/>
    </location>
</feature>
<feature type="region of interest" description="Mediates microtubule-binding and homooligomerization" evidence="1">
    <location>
        <begin position="168"/>
        <end position="211"/>
    </location>
</feature>
<feature type="region of interest" description="Disordered" evidence="6">
    <location>
        <begin position="328"/>
        <end position="364"/>
    </location>
</feature>
<feature type="coiled-coil region" evidence="2">
    <location>
        <begin position="194"/>
        <end position="252"/>
    </location>
</feature>
<feature type="compositionally biased region" description="Acidic residues" evidence="6">
    <location>
        <begin position="334"/>
        <end position="347"/>
    </location>
</feature>
<feature type="compositionally biased region" description="Basic and acidic residues" evidence="6">
    <location>
        <begin position="353"/>
        <end position="364"/>
    </location>
</feature>
<feature type="binding site" evidence="3">
    <location>
        <position position="126"/>
    </location>
    <ligand>
        <name>Zn(2+)</name>
        <dbReference type="ChEBI" id="CHEBI:29105"/>
    </ligand>
</feature>
<feature type="binding site" evidence="3">
    <location>
        <position position="129"/>
    </location>
    <ligand>
        <name>Zn(2+)</name>
        <dbReference type="ChEBI" id="CHEBI:29105"/>
    </ligand>
</feature>
<feature type="binding site" evidence="3">
    <location>
        <position position="149"/>
    </location>
    <ligand>
        <name>Zn(2+)</name>
        <dbReference type="ChEBI" id="CHEBI:29105"/>
    </ligand>
</feature>
<feature type="binding site" evidence="3">
    <location>
        <position position="155"/>
    </location>
    <ligand>
        <name>Zn(2+)</name>
        <dbReference type="ChEBI" id="CHEBI:29105"/>
    </ligand>
</feature>
<gene>
    <name type="primary">Trim54</name>
    <name type="synonym">Rnf30</name>
</gene>
<reference key="1">
    <citation type="journal article" date="2004" name="Genome Res.">
        <title>The status, quality, and expansion of the NIH full-length cDNA project: the Mammalian Gene Collection (MGC).</title>
        <authorList>
            <consortium name="The MGC Project Team"/>
        </authorList>
    </citation>
    <scope>NUCLEOTIDE SEQUENCE [LARGE SCALE MRNA]</scope>
    <source>
        <tissue>Heart</tissue>
    </source>
</reference>
<sequence>MNFTVGFKPLLGDAHNMDNLEKQLICPICLEMFSKPVVILPCQHNLCRKCANDVFQASNPLWQSRGSTTVSSGGRFRCPSCRHEVVLDRHGVYGLQRNLLVENIIDIYKQESSRPLHSKAEQHLMCEEHEDEKINIYCLSCEVPTCSLCKVFGAHKDCEVAPLPTIYKRQKSELSDGIAMLVAGNDRVQAVITQMEEVCQTIEDNSRRQKQLLNQKFETLCAVLEERKGELLQALARVQEEKLQRVRSLIRQYGDHLEASSKLVESAIQSMEEPQMALYLQQAKELINKVGAMSKVELAGRPEPGYESMEQFSVIVEHVAEMLRTIDFQPGASGDEEDDEVTLDGEEGNTGLEEERLDGPEGLH</sequence>
<accession>Q5XIH6</accession>
<protein>
    <recommendedName>
        <fullName>Tripartite motif-containing protein 54</fullName>
    </recommendedName>
    <alternativeName>
        <fullName>RING finger protein 30</fullName>
    </alternativeName>
</protein>